<organism>
    <name type="scientific">Erwinia tasmaniensis (strain DSM 17950 / CFBP 7177 / CIP 109463 / NCPPB 4357 / Et1/99)</name>
    <dbReference type="NCBI Taxonomy" id="465817"/>
    <lineage>
        <taxon>Bacteria</taxon>
        <taxon>Pseudomonadati</taxon>
        <taxon>Pseudomonadota</taxon>
        <taxon>Gammaproteobacteria</taxon>
        <taxon>Enterobacterales</taxon>
        <taxon>Erwiniaceae</taxon>
        <taxon>Erwinia</taxon>
    </lineage>
</organism>
<feature type="chain" id="PRO_1000089175" description="Endoribonuclease YbeY">
    <location>
        <begin position="1"/>
        <end position="155"/>
    </location>
</feature>
<feature type="binding site" evidence="1">
    <location>
        <position position="114"/>
    </location>
    <ligand>
        <name>Zn(2+)</name>
        <dbReference type="ChEBI" id="CHEBI:29105"/>
        <note>catalytic</note>
    </ligand>
</feature>
<feature type="binding site" evidence="1">
    <location>
        <position position="118"/>
    </location>
    <ligand>
        <name>Zn(2+)</name>
        <dbReference type="ChEBI" id="CHEBI:29105"/>
        <note>catalytic</note>
    </ligand>
</feature>
<feature type="binding site" evidence="1">
    <location>
        <position position="124"/>
    </location>
    <ligand>
        <name>Zn(2+)</name>
        <dbReference type="ChEBI" id="CHEBI:29105"/>
        <note>catalytic</note>
    </ligand>
</feature>
<evidence type="ECO:0000255" key="1">
    <source>
        <dbReference type="HAMAP-Rule" id="MF_00009"/>
    </source>
</evidence>
<dbReference type="EC" id="3.1.-.-" evidence="1"/>
<dbReference type="EMBL" id="CU468135">
    <property type="protein sequence ID" value="CAO97385.1"/>
    <property type="molecule type" value="Genomic_DNA"/>
</dbReference>
<dbReference type="RefSeq" id="WP_012442054.1">
    <property type="nucleotide sequence ID" value="NC_010694.1"/>
</dbReference>
<dbReference type="SMR" id="B2VBL6"/>
<dbReference type="STRING" id="465817.ETA_23390"/>
<dbReference type="KEGG" id="eta:ETA_23390"/>
<dbReference type="eggNOG" id="COG0319">
    <property type="taxonomic scope" value="Bacteria"/>
</dbReference>
<dbReference type="HOGENOM" id="CLU_106710_0_1_6"/>
<dbReference type="OrthoDB" id="9807740at2"/>
<dbReference type="Proteomes" id="UP000001726">
    <property type="component" value="Chromosome"/>
</dbReference>
<dbReference type="GO" id="GO:0005737">
    <property type="term" value="C:cytoplasm"/>
    <property type="evidence" value="ECO:0007669"/>
    <property type="project" value="UniProtKB-SubCell"/>
</dbReference>
<dbReference type="GO" id="GO:0004222">
    <property type="term" value="F:metalloendopeptidase activity"/>
    <property type="evidence" value="ECO:0007669"/>
    <property type="project" value="InterPro"/>
</dbReference>
<dbReference type="GO" id="GO:0004521">
    <property type="term" value="F:RNA endonuclease activity"/>
    <property type="evidence" value="ECO:0007669"/>
    <property type="project" value="UniProtKB-UniRule"/>
</dbReference>
<dbReference type="GO" id="GO:0008270">
    <property type="term" value="F:zinc ion binding"/>
    <property type="evidence" value="ECO:0007669"/>
    <property type="project" value="UniProtKB-UniRule"/>
</dbReference>
<dbReference type="GO" id="GO:0006364">
    <property type="term" value="P:rRNA processing"/>
    <property type="evidence" value="ECO:0007669"/>
    <property type="project" value="UniProtKB-UniRule"/>
</dbReference>
<dbReference type="Gene3D" id="3.40.390.30">
    <property type="entry name" value="Metalloproteases ('zincins'), catalytic domain"/>
    <property type="match status" value="1"/>
</dbReference>
<dbReference type="HAMAP" id="MF_00009">
    <property type="entry name" value="Endoribonucl_YbeY"/>
    <property type="match status" value="1"/>
</dbReference>
<dbReference type="InterPro" id="IPR023091">
    <property type="entry name" value="MetalPrtase_cat_dom_sf_prd"/>
</dbReference>
<dbReference type="InterPro" id="IPR002036">
    <property type="entry name" value="YbeY"/>
</dbReference>
<dbReference type="InterPro" id="IPR020549">
    <property type="entry name" value="YbeY_CS"/>
</dbReference>
<dbReference type="NCBIfam" id="TIGR00043">
    <property type="entry name" value="rRNA maturation RNase YbeY"/>
    <property type="match status" value="1"/>
</dbReference>
<dbReference type="PANTHER" id="PTHR46986">
    <property type="entry name" value="ENDORIBONUCLEASE YBEY, CHLOROPLASTIC"/>
    <property type="match status" value="1"/>
</dbReference>
<dbReference type="PANTHER" id="PTHR46986:SF1">
    <property type="entry name" value="ENDORIBONUCLEASE YBEY, CHLOROPLASTIC"/>
    <property type="match status" value="1"/>
</dbReference>
<dbReference type="Pfam" id="PF02130">
    <property type="entry name" value="YbeY"/>
    <property type="match status" value="1"/>
</dbReference>
<dbReference type="SUPFAM" id="SSF55486">
    <property type="entry name" value="Metalloproteases ('zincins'), catalytic domain"/>
    <property type="match status" value="1"/>
</dbReference>
<dbReference type="PROSITE" id="PS01306">
    <property type="entry name" value="UPF0054"/>
    <property type="match status" value="1"/>
</dbReference>
<sequence length="155" mass="17640">MSGVILDLQLACENEQGLPAETDFQRWLEAVLPQFQPESEVTIRLVDEAESRELNHTYRSKDKPTNVLSFPFEAPPGIELPLLGDLIICRQVVEQEAVEQGKTREAHWAHMVIHGSLHLLGYDHIEDDEAEEMESLETEIMLALGYPDPYISEKE</sequence>
<name>YBEY_ERWT9</name>
<reference key="1">
    <citation type="journal article" date="2008" name="Environ. Microbiol.">
        <title>The genome of Erwinia tasmaniensis strain Et1/99, a non-pathogenic bacterium in the genus Erwinia.</title>
        <authorList>
            <person name="Kube M."/>
            <person name="Migdoll A.M."/>
            <person name="Mueller I."/>
            <person name="Kuhl H."/>
            <person name="Beck A."/>
            <person name="Reinhardt R."/>
            <person name="Geider K."/>
        </authorList>
    </citation>
    <scope>NUCLEOTIDE SEQUENCE [LARGE SCALE GENOMIC DNA]</scope>
    <source>
        <strain>DSM 17950 / CFBP 7177 / CIP 109463 / NCPPB 4357 / Et1/99</strain>
    </source>
</reference>
<comment type="function">
    <text evidence="1">Single strand-specific metallo-endoribonuclease involved in late-stage 70S ribosome quality control and in maturation of the 3' terminus of the 16S rRNA.</text>
</comment>
<comment type="cofactor">
    <cofactor evidence="1">
        <name>Zn(2+)</name>
        <dbReference type="ChEBI" id="CHEBI:29105"/>
    </cofactor>
    <text evidence="1">Binds 1 zinc ion.</text>
</comment>
<comment type="subcellular location">
    <subcellularLocation>
        <location evidence="1">Cytoplasm</location>
    </subcellularLocation>
</comment>
<comment type="similarity">
    <text evidence="1">Belongs to the endoribonuclease YbeY family.</text>
</comment>
<protein>
    <recommendedName>
        <fullName evidence="1">Endoribonuclease YbeY</fullName>
        <ecNumber evidence="1">3.1.-.-</ecNumber>
    </recommendedName>
</protein>
<keyword id="KW-0963">Cytoplasm</keyword>
<keyword id="KW-0255">Endonuclease</keyword>
<keyword id="KW-0378">Hydrolase</keyword>
<keyword id="KW-0479">Metal-binding</keyword>
<keyword id="KW-0540">Nuclease</keyword>
<keyword id="KW-1185">Reference proteome</keyword>
<keyword id="KW-0690">Ribosome biogenesis</keyword>
<keyword id="KW-0698">rRNA processing</keyword>
<keyword id="KW-0862">Zinc</keyword>
<proteinExistence type="inferred from homology"/>
<gene>
    <name evidence="1" type="primary">ybeY</name>
    <name type="ordered locus">ETA_23390</name>
</gene>
<accession>B2VBL6</accession>